<sequence length="532" mass="57742">MLDASISPVVLVILDGWGYRNATEGNAIRTAETPIMDALWEAYPSTLIHTSGKDVGLPDGQMGNSEVGHLNLGAGRIVPQELVRITDAVEDGSILENPALLQACSAVRQHGSKLHLIGLCSDGGVHAHLDHLGGLLKLAAAQGIQDVYIHAITDGRDTNPTEGVNCITKIERLIATAGVGQIVTICGRYFAMDRDRRWDRVRKAYELLTIDGEGCGQTATEVLQETYAKGVSDEFVEPTRLAPGAIAPGDGVIFFNFRPDRARQLTYAFVEAEFEGFERDLIQPLTFVTFTQYDANLNVPVAFEPQNLTNILGEVVANHGLRQFRTAETEKYPHVTYFFNGGIEEPFPGEDRELIPSPMVATYDRAPKMSAQAVTDAAIAAIDKGIYSLVVINYANPDMVGHTGKMGATVEAIETVDRCLGRLVSAINRAGGTALITADHGNAEYMWDENGEPWTAHTTNLVPFIVVEGERRKLPGFGTEIPLREDGRLSDIAPTILQLLGLPQPVEMTGRSMIEPAAYEVKQGRTPVKVGV</sequence>
<gene>
    <name evidence="1" type="primary">gpmI</name>
    <name type="synonym">pgm</name>
    <name type="ordered locus">syc1049_d</name>
</gene>
<dbReference type="EC" id="5.4.2.12" evidence="1"/>
<dbReference type="EMBL" id="AP008231">
    <property type="protein sequence ID" value="BAD79239.1"/>
    <property type="molecule type" value="Genomic_DNA"/>
</dbReference>
<dbReference type="RefSeq" id="WP_011243361.1">
    <property type="nucleotide sequence ID" value="NZ_CP085785.1"/>
</dbReference>
<dbReference type="SMR" id="Q5N381"/>
<dbReference type="GeneID" id="72429292"/>
<dbReference type="KEGG" id="syc:syc1049_d"/>
<dbReference type="eggNOG" id="COG0696">
    <property type="taxonomic scope" value="Bacteria"/>
</dbReference>
<dbReference type="UniPathway" id="UPA00109">
    <property type="reaction ID" value="UER00186"/>
</dbReference>
<dbReference type="Proteomes" id="UP000001175">
    <property type="component" value="Chromosome"/>
</dbReference>
<dbReference type="GO" id="GO:0005829">
    <property type="term" value="C:cytosol"/>
    <property type="evidence" value="ECO:0007669"/>
    <property type="project" value="TreeGrafter"/>
</dbReference>
<dbReference type="GO" id="GO:0030145">
    <property type="term" value="F:manganese ion binding"/>
    <property type="evidence" value="ECO:0007669"/>
    <property type="project" value="UniProtKB-UniRule"/>
</dbReference>
<dbReference type="GO" id="GO:0004619">
    <property type="term" value="F:phosphoglycerate mutase activity"/>
    <property type="evidence" value="ECO:0007669"/>
    <property type="project" value="UniProtKB-EC"/>
</dbReference>
<dbReference type="GO" id="GO:0006007">
    <property type="term" value="P:glucose catabolic process"/>
    <property type="evidence" value="ECO:0007669"/>
    <property type="project" value="InterPro"/>
</dbReference>
<dbReference type="GO" id="GO:0006096">
    <property type="term" value="P:glycolytic process"/>
    <property type="evidence" value="ECO:0007669"/>
    <property type="project" value="UniProtKB-UniRule"/>
</dbReference>
<dbReference type="CDD" id="cd16010">
    <property type="entry name" value="iPGM"/>
    <property type="match status" value="1"/>
</dbReference>
<dbReference type="FunFam" id="3.40.1450.10:FF:000002">
    <property type="entry name" value="2,3-bisphosphoglycerate-independent phosphoglycerate mutase"/>
    <property type="match status" value="1"/>
</dbReference>
<dbReference type="Gene3D" id="3.40.720.10">
    <property type="entry name" value="Alkaline Phosphatase, subunit A"/>
    <property type="match status" value="1"/>
</dbReference>
<dbReference type="Gene3D" id="3.40.1450.10">
    <property type="entry name" value="BPG-independent phosphoglycerate mutase, domain B"/>
    <property type="match status" value="1"/>
</dbReference>
<dbReference type="HAMAP" id="MF_01038">
    <property type="entry name" value="GpmI"/>
    <property type="match status" value="1"/>
</dbReference>
<dbReference type="InterPro" id="IPR017850">
    <property type="entry name" value="Alkaline_phosphatase_core_sf"/>
</dbReference>
<dbReference type="InterPro" id="IPR011258">
    <property type="entry name" value="BPG-indep_PGM_N"/>
</dbReference>
<dbReference type="InterPro" id="IPR006124">
    <property type="entry name" value="Metalloenzyme"/>
</dbReference>
<dbReference type="InterPro" id="IPR036646">
    <property type="entry name" value="PGAM_B_sf"/>
</dbReference>
<dbReference type="InterPro" id="IPR005995">
    <property type="entry name" value="Pgm_bpd_ind"/>
</dbReference>
<dbReference type="NCBIfam" id="TIGR01307">
    <property type="entry name" value="pgm_bpd_ind"/>
    <property type="match status" value="1"/>
</dbReference>
<dbReference type="PANTHER" id="PTHR31637">
    <property type="entry name" value="2,3-BISPHOSPHOGLYCERATE-INDEPENDENT PHOSPHOGLYCERATE MUTASE"/>
    <property type="match status" value="1"/>
</dbReference>
<dbReference type="PANTHER" id="PTHR31637:SF0">
    <property type="entry name" value="2,3-BISPHOSPHOGLYCERATE-INDEPENDENT PHOSPHOGLYCERATE MUTASE"/>
    <property type="match status" value="1"/>
</dbReference>
<dbReference type="Pfam" id="PF06415">
    <property type="entry name" value="iPGM_N"/>
    <property type="match status" value="1"/>
</dbReference>
<dbReference type="Pfam" id="PF01676">
    <property type="entry name" value="Metalloenzyme"/>
    <property type="match status" value="1"/>
</dbReference>
<dbReference type="PIRSF" id="PIRSF001492">
    <property type="entry name" value="IPGAM"/>
    <property type="match status" value="1"/>
</dbReference>
<dbReference type="SUPFAM" id="SSF64158">
    <property type="entry name" value="2,3-Bisphosphoglycerate-independent phosphoglycerate mutase, substrate-binding domain"/>
    <property type="match status" value="1"/>
</dbReference>
<dbReference type="SUPFAM" id="SSF53649">
    <property type="entry name" value="Alkaline phosphatase-like"/>
    <property type="match status" value="1"/>
</dbReference>
<feature type="chain" id="PRO_0000212220" description="2,3-bisphosphoglycerate-independent phosphoglycerate mutase">
    <location>
        <begin position="1"/>
        <end position="532"/>
    </location>
</feature>
<feature type="active site" description="Phosphoserine intermediate" evidence="1">
    <location>
        <position position="65"/>
    </location>
</feature>
<feature type="binding site" evidence="1">
    <location>
        <position position="15"/>
    </location>
    <ligand>
        <name>Mn(2+)</name>
        <dbReference type="ChEBI" id="CHEBI:29035"/>
        <label>2</label>
    </ligand>
</feature>
<feature type="binding site" evidence="1">
    <location>
        <position position="65"/>
    </location>
    <ligand>
        <name>Mn(2+)</name>
        <dbReference type="ChEBI" id="CHEBI:29035"/>
        <label>2</label>
    </ligand>
</feature>
<feature type="binding site" evidence="1">
    <location>
        <position position="126"/>
    </location>
    <ligand>
        <name>substrate</name>
    </ligand>
</feature>
<feature type="binding site" evidence="1">
    <location>
        <begin position="156"/>
        <end position="157"/>
    </location>
    <ligand>
        <name>substrate</name>
    </ligand>
</feature>
<feature type="binding site" evidence="1">
    <location>
        <position position="188"/>
    </location>
    <ligand>
        <name>substrate</name>
    </ligand>
</feature>
<feature type="binding site" evidence="1">
    <location>
        <position position="194"/>
    </location>
    <ligand>
        <name>substrate</name>
    </ligand>
</feature>
<feature type="binding site" evidence="1">
    <location>
        <begin position="258"/>
        <end position="261"/>
    </location>
    <ligand>
        <name>substrate</name>
    </ligand>
</feature>
<feature type="binding site" evidence="1">
    <location>
        <position position="331"/>
    </location>
    <ligand>
        <name>substrate</name>
    </ligand>
</feature>
<feature type="binding site" evidence="1">
    <location>
        <position position="398"/>
    </location>
    <ligand>
        <name>Mn(2+)</name>
        <dbReference type="ChEBI" id="CHEBI:29035"/>
        <label>1</label>
    </ligand>
</feature>
<feature type="binding site" evidence="1">
    <location>
        <position position="402"/>
    </location>
    <ligand>
        <name>Mn(2+)</name>
        <dbReference type="ChEBI" id="CHEBI:29035"/>
        <label>1</label>
    </ligand>
</feature>
<feature type="binding site" evidence="1">
    <location>
        <position position="439"/>
    </location>
    <ligand>
        <name>Mn(2+)</name>
        <dbReference type="ChEBI" id="CHEBI:29035"/>
        <label>2</label>
    </ligand>
</feature>
<feature type="binding site" evidence="1">
    <location>
        <position position="440"/>
    </location>
    <ligand>
        <name>Mn(2+)</name>
        <dbReference type="ChEBI" id="CHEBI:29035"/>
        <label>2</label>
    </ligand>
</feature>
<feature type="binding site" evidence="1">
    <location>
        <position position="457"/>
    </location>
    <ligand>
        <name>Mn(2+)</name>
        <dbReference type="ChEBI" id="CHEBI:29035"/>
        <label>1</label>
    </ligand>
</feature>
<protein>
    <recommendedName>
        <fullName evidence="1">2,3-bisphosphoglycerate-independent phosphoglycerate mutase</fullName>
        <shortName evidence="1">BPG-independent PGAM</shortName>
        <shortName evidence="1">Phosphoglyceromutase</shortName>
        <shortName evidence="1">iPGM</shortName>
        <ecNumber evidence="1">5.4.2.12</ecNumber>
    </recommendedName>
</protein>
<organism>
    <name type="scientific">Synechococcus sp. (strain ATCC 27144 / PCC 6301 / SAUG 1402/1)</name>
    <name type="common">Anacystis nidulans</name>
    <dbReference type="NCBI Taxonomy" id="269084"/>
    <lineage>
        <taxon>Bacteria</taxon>
        <taxon>Bacillati</taxon>
        <taxon>Cyanobacteriota</taxon>
        <taxon>Cyanophyceae</taxon>
        <taxon>Synechococcales</taxon>
        <taxon>Synechococcaceae</taxon>
        <taxon>Synechococcus</taxon>
    </lineage>
</organism>
<accession>Q5N381</accession>
<comment type="function">
    <text evidence="1">Catalyzes the interconversion of 2-phosphoglycerate and 3-phosphoglycerate.</text>
</comment>
<comment type="catalytic activity">
    <reaction evidence="1">
        <text>(2R)-2-phosphoglycerate = (2R)-3-phosphoglycerate</text>
        <dbReference type="Rhea" id="RHEA:15901"/>
        <dbReference type="ChEBI" id="CHEBI:58272"/>
        <dbReference type="ChEBI" id="CHEBI:58289"/>
        <dbReference type="EC" id="5.4.2.12"/>
    </reaction>
</comment>
<comment type="cofactor">
    <cofactor evidence="1">
        <name>Mn(2+)</name>
        <dbReference type="ChEBI" id="CHEBI:29035"/>
    </cofactor>
    <text evidence="1">Binds 2 manganese ions per subunit.</text>
</comment>
<comment type="pathway">
    <text evidence="1">Carbohydrate degradation; glycolysis; pyruvate from D-glyceraldehyde 3-phosphate: step 3/5.</text>
</comment>
<comment type="subunit">
    <text evidence="1">Monomer.</text>
</comment>
<comment type="similarity">
    <text evidence="1">Belongs to the BPG-independent phosphoglycerate mutase family.</text>
</comment>
<reference key="1">
    <citation type="journal article" date="2007" name="Photosyn. Res.">
        <title>Complete nucleotide sequence of the freshwater unicellular cyanobacterium Synechococcus elongatus PCC 6301 chromosome: gene content and organization.</title>
        <authorList>
            <person name="Sugita C."/>
            <person name="Ogata K."/>
            <person name="Shikata M."/>
            <person name="Jikuya H."/>
            <person name="Takano J."/>
            <person name="Furumichi M."/>
            <person name="Kanehisa M."/>
            <person name="Omata T."/>
            <person name="Sugiura M."/>
            <person name="Sugita M."/>
        </authorList>
    </citation>
    <scope>NUCLEOTIDE SEQUENCE [LARGE SCALE GENOMIC DNA]</scope>
    <source>
        <strain>ATCC 27144 / PCC 6301 / SAUG 1402/1</strain>
    </source>
</reference>
<proteinExistence type="inferred from homology"/>
<name>GPMI_SYNP6</name>
<keyword id="KW-0324">Glycolysis</keyword>
<keyword id="KW-0413">Isomerase</keyword>
<keyword id="KW-0464">Manganese</keyword>
<keyword id="KW-0479">Metal-binding</keyword>
<evidence type="ECO:0000255" key="1">
    <source>
        <dbReference type="HAMAP-Rule" id="MF_01038"/>
    </source>
</evidence>